<gene>
    <name evidence="2" type="primary">HtrA2</name>
    <name type="ORF">GM25850</name>
</gene>
<protein>
    <recommendedName>
        <fullName evidence="2">Serine protease HTRA2, mitochondrial</fullName>
        <ecNumber>3.4.21.108</ecNumber>
    </recommendedName>
    <alternativeName>
        <fullName evidence="2">High temperature requirement protein A2</fullName>
    </alternativeName>
</protein>
<organism>
    <name type="scientific">Drosophila sechellia</name>
    <name type="common">Fruit fly</name>
    <dbReference type="NCBI Taxonomy" id="7238"/>
    <lineage>
        <taxon>Eukaryota</taxon>
        <taxon>Metazoa</taxon>
        <taxon>Ecdysozoa</taxon>
        <taxon>Arthropoda</taxon>
        <taxon>Hexapoda</taxon>
        <taxon>Insecta</taxon>
        <taxon>Pterygota</taxon>
        <taxon>Neoptera</taxon>
        <taxon>Endopterygota</taxon>
        <taxon>Diptera</taxon>
        <taxon>Brachycera</taxon>
        <taxon>Muscomorpha</taxon>
        <taxon>Ephydroidea</taxon>
        <taxon>Drosophilidae</taxon>
        <taxon>Drosophila</taxon>
        <taxon>Sophophora</taxon>
    </lineage>
</organism>
<sequence length="422" mass="45927">MALRGSHRLEVIFKRCIASPVLHSQAGNRRSSQLAIKGVDPNSNGNSGQYQQNGEHKEKGWRRLVRFFVPFSLGAAVSAAIIQREDLTPTIAASKMTGRRRDFNFIADVVAGCADSVVYIEIKDTRHFDYFSGQPITASNGSGFIIEQNGLILTNAHVVINKPHTMVQVRLSDGRTFPATIEDVDQTSDLATLRIQVNNLSVMRLGKSSTLRSGEWVVALGSPLALSNTVTAGVISSTQRASQELGLRNRDINYLQTDAAITFGNSGGPLVNLDGEAIGVNSMKVTAGISFAIPIDYVKVFLERAAEKRKKGSAYKTGYPVKRYMGITMLTLTPDILFELKSRSQNMPSNLTHGVLVWKVIVGSPAHSGGLQPGDIVTHINKKEIKNSSDVYDALADNSKTLDIVILRGVKQMHVTITPEDP</sequence>
<comment type="function">
    <text evidence="2">Serine protease that shows proteolytic activity against a non-specific substrate beta-casein. Promotes or induces cell death either by direct binding to and inhibition of BIRC proteins (also called inhibitor of apoptosis proteins, IAPs), leading to an increase in caspase activity, or by a BIRC inhibition-independent, caspase-independent and serine protease activity-dependent mechanism. Can antagonize antiapoptotic activity of th/Diap1 by directly inducing the degradation of th/Diap1 (By similarity).</text>
</comment>
<comment type="catalytic activity">
    <reaction>
        <text>Cleavage of non-polar aliphatic amino-acids at the P1 position, with a preference for Val, Ile and Met. At the P2 and P3 positions, Arg is selected most strongly with a secondary preference for other hydrophilic residues.</text>
        <dbReference type="EC" id="3.4.21.108"/>
    </reaction>
</comment>
<comment type="subunit">
    <text evidence="2">Interacts with th/DIAP1 (via BIR 2 domain).</text>
</comment>
<comment type="subcellular location">
    <subcellularLocation>
        <location evidence="2">Mitochondrion intermembrane space</location>
        <topology evidence="3">Single-pass membrane protein</topology>
    </subcellularLocation>
    <subcellularLocation>
        <location evidence="2">Mitochondrion membrane</location>
        <topology evidence="3">Single-pass membrane protein</topology>
    </subcellularLocation>
    <text evidence="2">Predominantly present in the intermembrane space. Released into the cytosol following apoptotic stimuli, such as UV treatment. The extramitochondrial protein does not diffuse throughout the cytosol but stays near the mitochondria.</text>
</comment>
<comment type="similarity">
    <text evidence="3">Belongs to the peptidase S1C family.</text>
</comment>
<name>HTRA2_DROSE</name>
<proteinExistence type="inferred from homology"/>
<reference evidence="6" key="1">
    <citation type="journal article" date="2007" name="Nature">
        <title>Evolution of genes and genomes on the Drosophila phylogeny.</title>
        <authorList>
            <consortium name="Drosophila 12 genomes consortium"/>
        </authorList>
    </citation>
    <scope>NUCLEOTIDE SEQUENCE [LARGE SCALE GENOMIC DNA]</scope>
    <source>
        <strain evidence="6">Rob3c / Tucson 14021-0248.25</strain>
    </source>
</reference>
<accession>B4HEM8</accession>
<dbReference type="EC" id="3.4.21.108"/>
<dbReference type="EMBL" id="CH480815">
    <property type="protein sequence ID" value="EDW42185.1"/>
    <property type="molecule type" value="Genomic_DNA"/>
</dbReference>
<dbReference type="SMR" id="B4HEM8"/>
<dbReference type="STRING" id="7238.B4HEM8"/>
<dbReference type="EnsemblMetazoa" id="FBtr0208835">
    <property type="protein sequence ID" value="FBpp0207327"/>
    <property type="gene ID" value="FBgn0180706"/>
</dbReference>
<dbReference type="EnsemblMetazoa" id="XM_002031163.2">
    <property type="protein sequence ID" value="XP_002031199.1"/>
    <property type="gene ID" value="LOC6606394"/>
</dbReference>
<dbReference type="GeneID" id="6606394"/>
<dbReference type="KEGG" id="dse:6606394"/>
<dbReference type="CTD" id="27429"/>
<dbReference type="HOGENOM" id="CLU_020120_6_0_1"/>
<dbReference type="OMA" id="IMSPEGY"/>
<dbReference type="OrthoDB" id="20320at7215"/>
<dbReference type="PhylomeDB" id="B4HEM8"/>
<dbReference type="Proteomes" id="UP000001292">
    <property type="component" value="Unassembled WGS sequence"/>
</dbReference>
<dbReference type="GO" id="GO:0005829">
    <property type="term" value="C:cytosol"/>
    <property type="evidence" value="ECO:0007669"/>
    <property type="project" value="EnsemblMetazoa"/>
</dbReference>
<dbReference type="GO" id="GO:0005758">
    <property type="term" value="C:mitochondrial intermembrane space"/>
    <property type="evidence" value="ECO:0007669"/>
    <property type="project" value="UniProtKB-SubCell"/>
</dbReference>
<dbReference type="GO" id="GO:0031966">
    <property type="term" value="C:mitochondrial membrane"/>
    <property type="evidence" value="ECO:0007669"/>
    <property type="project" value="UniProtKB-SubCell"/>
</dbReference>
<dbReference type="GO" id="GO:0016006">
    <property type="term" value="C:Nebenkern"/>
    <property type="evidence" value="ECO:0007669"/>
    <property type="project" value="EnsemblMetazoa"/>
</dbReference>
<dbReference type="GO" id="GO:0004252">
    <property type="term" value="F:serine-type endopeptidase activity"/>
    <property type="evidence" value="ECO:0007669"/>
    <property type="project" value="EnsemblMetazoa"/>
</dbReference>
<dbReference type="GO" id="GO:0006915">
    <property type="term" value="P:apoptotic process"/>
    <property type="evidence" value="ECO:0007669"/>
    <property type="project" value="UniProtKB-KW"/>
</dbReference>
<dbReference type="GO" id="GO:0035234">
    <property type="term" value="P:ectopic germ cell programmed cell death"/>
    <property type="evidence" value="ECO:0007669"/>
    <property type="project" value="EnsemblMetazoa"/>
</dbReference>
<dbReference type="GO" id="GO:0007005">
    <property type="term" value="P:mitochondrion organization"/>
    <property type="evidence" value="ECO:0007669"/>
    <property type="project" value="EnsemblMetazoa"/>
</dbReference>
<dbReference type="GO" id="GO:0043065">
    <property type="term" value="P:positive regulation of apoptotic process"/>
    <property type="evidence" value="ECO:0007669"/>
    <property type="project" value="EnsemblMetazoa"/>
</dbReference>
<dbReference type="GO" id="GO:0006508">
    <property type="term" value="P:proteolysis"/>
    <property type="evidence" value="ECO:0007669"/>
    <property type="project" value="UniProtKB-KW"/>
</dbReference>
<dbReference type="GO" id="GO:0007283">
    <property type="term" value="P:spermatogenesis"/>
    <property type="evidence" value="ECO:0007669"/>
    <property type="project" value="EnsemblMetazoa"/>
</dbReference>
<dbReference type="CDD" id="cd06785">
    <property type="entry name" value="cpPDZ_HtrA-like"/>
    <property type="match status" value="1"/>
</dbReference>
<dbReference type="FunFam" id="2.40.10.120:FF:000004">
    <property type="entry name" value="Serine protease HTRA2, mitochondrial"/>
    <property type="match status" value="1"/>
</dbReference>
<dbReference type="Gene3D" id="2.30.42.10">
    <property type="match status" value="1"/>
</dbReference>
<dbReference type="Gene3D" id="2.40.10.120">
    <property type="match status" value="1"/>
</dbReference>
<dbReference type="InterPro" id="IPR001478">
    <property type="entry name" value="PDZ"/>
</dbReference>
<dbReference type="InterPro" id="IPR041489">
    <property type="entry name" value="PDZ_6"/>
</dbReference>
<dbReference type="InterPro" id="IPR036034">
    <property type="entry name" value="PDZ_sf"/>
</dbReference>
<dbReference type="InterPro" id="IPR009003">
    <property type="entry name" value="Peptidase_S1_PA"/>
</dbReference>
<dbReference type="InterPro" id="IPR001940">
    <property type="entry name" value="Peptidase_S1C"/>
</dbReference>
<dbReference type="PANTHER" id="PTHR22939">
    <property type="entry name" value="SERINE PROTEASE FAMILY S1C HTRA-RELATED"/>
    <property type="match status" value="1"/>
</dbReference>
<dbReference type="PANTHER" id="PTHR22939:SF129">
    <property type="entry name" value="SERINE PROTEASE HTRA2, MITOCHONDRIAL"/>
    <property type="match status" value="1"/>
</dbReference>
<dbReference type="Pfam" id="PF17820">
    <property type="entry name" value="PDZ_6"/>
    <property type="match status" value="1"/>
</dbReference>
<dbReference type="Pfam" id="PF13365">
    <property type="entry name" value="Trypsin_2"/>
    <property type="match status" value="1"/>
</dbReference>
<dbReference type="PRINTS" id="PR00834">
    <property type="entry name" value="PROTEASES2C"/>
</dbReference>
<dbReference type="SMART" id="SM00228">
    <property type="entry name" value="PDZ"/>
    <property type="match status" value="1"/>
</dbReference>
<dbReference type="SUPFAM" id="SSF50156">
    <property type="entry name" value="PDZ domain-like"/>
    <property type="match status" value="1"/>
</dbReference>
<dbReference type="SUPFAM" id="SSF50494">
    <property type="entry name" value="Trypsin-like serine proteases"/>
    <property type="match status" value="1"/>
</dbReference>
<dbReference type="PROSITE" id="PS50106">
    <property type="entry name" value="PDZ"/>
    <property type="match status" value="1"/>
</dbReference>
<keyword id="KW-0053">Apoptosis</keyword>
<keyword id="KW-0378">Hydrolase</keyword>
<keyword id="KW-0472">Membrane</keyword>
<keyword id="KW-0496">Mitochondrion</keyword>
<keyword id="KW-0645">Protease</keyword>
<keyword id="KW-1185">Reference proteome</keyword>
<keyword id="KW-0720">Serine protease</keyword>
<keyword id="KW-0809">Transit peptide</keyword>
<keyword id="KW-0812">Transmembrane</keyword>
<keyword id="KW-1133">Transmembrane helix</keyword>
<keyword id="KW-0865">Zymogen</keyword>
<feature type="transit peptide" description="Mitochondrion" evidence="3">
    <location>
        <begin position="1"/>
        <end position="17"/>
    </location>
</feature>
<feature type="propeptide" id="PRO_0000382193" evidence="3">
    <location>
        <begin position="18"/>
        <end position="74"/>
    </location>
</feature>
<feature type="chain" id="PRO_0000382194" description="Serine protease HTRA2, mitochondrial" evidence="2">
    <location>
        <begin position="75"/>
        <end position="422"/>
    </location>
</feature>
<feature type="transmembrane region" description="Helical" evidence="3">
    <location>
        <begin position="64"/>
        <end position="82"/>
    </location>
</feature>
<feature type="domain" description="PDZ" evidence="4">
    <location>
        <begin position="325"/>
        <end position="410"/>
    </location>
</feature>
<feature type="region of interest" description="Disordered" evidence="5">
    <location>
        <begin position="28"/>
        <end position="55"/>
    </location>
</feature>
<feature type="region of interest" description="Serine protease" evidence="3">
    <location>
        <begin position="139"/>
        <end position="302"/>
    </location>
</feature>
<feature type="short sequence motif" description="IAP-binding" evidence="3">
    <location>
        <begin position="75"/>
        <end position="78"/>
    </location>
</feature>
<feature type="short sequence motif" description="IAP-binding" evidence="3">
    <location>
        <begin position="94"/>
        <end position="97"/>
    </location>
</feature>
<feature type="compositionally biased region" description="Low complexity" evidence="5">
    <location>
        <begin position="42"/>
        <end position="53"/>
    </location>
</feature>
<feature type="active site" description="Charge relay system" evidence="1">
    <location>
        <position position="157"/>
    </location>
</feature>
<feature type="active site" description="Charge relay system" evidence="1">
    <location>
        <position position="189"/>
    </location>
</feature>
<feature type="active site" description="Charge relay system" evidence="2">
    <location>
        <position position="266"/>
    </location>
</feature>
<evidence type="ECO:0000250" key="1">
    <source>
        <dbReference type="UniProtKB" id="O43464"/>
    </source>
</evidence>
<evidence type="ECO:0000250" key="2">
    <source>
        <dbReference type="UniProtKB" id="Q9VFJ3"/>
    </source>
</evidence>
<evidence type="ECO:0000255" key="3"/>
<evidence type="ECO:0000255" key="4">
    <source>
        <dbReference type="PROSITE-ProRule" id="PRU00143"/>
    </source>
</evidence>
<evidence type="ECO:0000256" key="5">
    <source>
        <dbReference type="SAM" id="MobiDB-lite"/>
    </source>
</evidence>
<evidence type="ECO:0000312" key="6">
    <source>
        <dbReference type="EMBL" id="EDW42185.1"/>
    </source>
</evidence>